<accession>Q5RCL0</accession>
<feature type="signal peptide" evidence="1">
    <location>
        <begin position="1"/>
        <end position="23"/>
    </location>
</feature>
<feature type="chain" id="PRO_0000320198" description="Uncharacterized protein C11orf87 homolog">
    <location>
        <begin position="24"/>
        <end position="197"/>
    </location>
</feature>
<feature type="topological domain" description="Extracellular" evidence="1">
    <location>
        <begin position="24"/>
        <end position="61"/>
    </location>
</feature>
<feature type="transmembrane region" description="Helical" evidence="1">
    <location>
        <begin position="62"/>
        <end position="82"/>
    </location>
</feature>
<feature type="topological domain" description="Cytoplasmic" evidence="1">
    <location>
        <begin position="83"/>
        <end position="197"/>
    </location>
</feature>
<feature type="region of interest" description="Disordered" evidence="2">
    <location>
        <begin position="94"/>
        <end position="179"/>
    </location>
</feature>
<feature type="compositionally biased region" description="Basic and acidic residues" evidence="2">
    <location>
        <begin position="96"/>
        <end position="107"/>
    </location>
</feature>
<feature type="compositionally biased region" description="Basic and acidic residues" evidence="2">
    <location>
        <begin position="125"/>
        <end position="136"/>
    </location>
</feature>
<feature type="compositionally biased region" description="Low complexity" evidence="2">
    <location>
        <begin position="147"/>
        <end position="161"/>
    </location>
</feature>
<feature type="compositionally biased region" description="Pro residues" evidence="2">
    <location>
        <begin position="162"/>
        <end position="171"/>
    </location>
</feature>
<feature type="glycosylation site" description="N-linked (GlcNAc...) asparagine" evidence="1">
    <location>
        <position position="19"/>
    </location>
</feature>
<feature type="glycosylation site" description="N-linked (GlcNAc...) asparagine" evidence="1">
    <location>
        <position position="26"/>
    </location>
</feature>
<organism>
    <name type="scientific">Pongo abelii</name>
    <name type="common">Sumatran orangutan</name>
    <name type="synonym">Pongo pygmaeus abelii</name>
    <dbReference type="NCBI Taxonomy" id="9601"/>
    <lineage>
        <taxon>Eukaryota</taxon>
        <taxon>Metazoa</taxon>
        <taxon>Chordata</taxon>
        <taxon>Craniata</taxon>
        <taxon>Vertebrata</taxon>
        <taxon>Euteleostomi</taxon>
        <taxon>Mammalia</taxon>
        <taxon>Eutheria</taxon>
        <taxon>Euarchontoglires</taxon>
        <taxon>Primates</taxon>
        <taxon>Haplorrhini</taxon>
        <taxon>Catarrhini</taxon>
        <taxon>Hominidae</taxon>
        <taxon>Pongo</taxon>
    </lineage>
</organism>
<comment type="subcellular location">
    <subcellularLocation>
        <location evidence="3">Membrane</location>
        <topology evidence="3">Single-pass type I membrane protein</topology>
    </subcellularLocation>
</comment>
<proteinExistence type="evidence at transcript level"/>
<protein>
    <recommendedName>
        <fullName>Uncharacterized protein C11orf87 homolog</fullName>
    </recommendedName>
</protein>
<keyword id="KW-0325">Glycoprotein</keyword>
<keyword id="KW-0472">Membrane</keyword>
<keyword id="KW-1185">Reference proteome</keyword>
<keyword id="KW-0732">Signal</keyword>
<keyword id="KW-0812">Transmembrane</keyword>
<keyword id="KW-1133">Transmembrane helix</keyword>
<sequence>MSARAPKELRLALPPCLLNRTFASPNASGSGNTGARGPGAGGSGTCITQVGQQLFQSFSSTLVLIVLVTLIFCLIVLSLSTFHIHKRRMKKRKMQRAQEEYERDHCSGSRGGGGLPRPGRQAPTHAKETRLERQPRDSPICAPSNASSSSSSSPGLPCQGPCAPPPPPPASSPQGAHAVSSCLDTAGEGLLQTVVLS</sequence>
<evidence type="ECO:0000255" key="1"/>
<evidence type="ECO:0000256" key="2">
    <source>
        <dbReference type="SAM" id="MobiDB-lite"/>
    </source>
</evidence>
<evidence type="ECO:0000305" key="3"/>
<reference key="1">
    <citation type="submission" date="2004-11" db="EMBL/GenBank/DDBJ databases">
        <authorList>
            <consortium name="The German cDNA consortium"/>
        </authorList>
    </citation>
    <scope>NUCLEOTIDE SEQUENCE [LARGE SCALE MRNA]</scope>
    <source>
        <tissue>Brain cortex</tissue>
    </source>
</reference>
<name>CK087_PONAB</name>
<dbReference type="EMBL" id="CR858260">
    <property type="protein sequence ID" value="CAH90497.1"/>
    <property type="molecule type" value="mRNA"/>
</dbReference>
<dbReference type="RefSeq" id="NP_001125260.1">
    <property type="nucleotide sequence ID" value="NM_001131788.1"/>
</dbReference>
<dbReference type="SMR" id="Q5RCL0"/>
<dbReference type="FunCoup" id="Q5RCL0">
    <property type="interactions" value="57"/>
</dbReference>
<dbReference type="Ensembl" id="ENSPPYT00000004585.2">
    <property type="protein sequence ID" value="ENSPPYP00000004410.2"/>
    <property type="gene ID" value="ENSPPYG00000003850.2"/>
</dbReference>
<dbReference type="GeneID" id="100172157"/>
<dbReference type="KEGG" id="pon:100172157"/>
<dbReference type="CTD" id="100511522"/>
<dbReference type="eggNOG" id="ENOG502S981">
    <property type="taxonomic scope" value="Eukaryota"/>
</dbReference>
<dbReference type="GeneTree" id="ENSGT00390000012905"/>
<dbReference type="HOGENOM" id="CLU_074982_0_0_1"/>
<dbReference type="InParanoid" id="Q5RCL0"/>
<dbReference type="OMA" id="YERDHCT"/>
<dbReference type="Proteomes" id="UP000001595">
    <property type="component" value="Chromosome 11"/>
</dbReference>
<dbReference type="GO" id="GO:0016020">
    <property type="term" value="C:membrane"/>
    <property type="evidence" value="ECO:0007669"/>
    <property type="project" value="UniProtKB-SubCell"/>
</dbReference>
<dbReference type="InterPro" id="IPR037670">
    <property type="entry name" value="C11orf87"/>
</dbReference>
<dbReference type="PANTHER" id="PTHR31870:SF2">
    <property type="entry name" value="CHROMOSOME 11 OPEN READING FRAME 87"/>
    <property type="match status" value="1"/>
</dbReference>
<dbReference type="PANTHER" id="PTHR31870">
    <property type="entry name" value="SI:DKEY-183I3.9-RELATED"/>
    <property type="match status" value="1"/>
</dbReference>